<comment type="function">
    <text evidence="2">ATP-dependent 3'-5' DNA helicase/translocase; binds dsDNA rather than ssDNA, unzipping it in a translocase rather than classical helicase activity. Component of the general transcription and DNA repair factor IIH (TFIIH) core complex. When complexed to CDK-activating kinase (CAK), involved in RNA transcription by RNA polymerase II. The ATPase activity of XPB/ERCC3, but not its helicase activity, is required for DNA opening; it may wrap around the damaged DNA wedging it open, causing localized melting and twisting that allows XPD/ERCC2 helicase to anchor. The ATP-dependent helicase activity of XPB/ERCC3 may be required for promoter escape. Also involved in transcription-coupled nucleotide excision repair (NER) of damaged DNA. In NER, TFIIH acts by opening DNA around the lesion to allow the excision of the damaged oligonucleotide and its replacement by a new DNA fragment. The structure of the TFIIH transcription complex differs from the NER-TFIIH complex; large movements by XPD/ERCC2 and XPB/ERCC3 are stabilized by XPA.</text>
</comment>
<comment type="catalytic activity">
    <reaction evidence="2">
        <text>Couples ATP hydrolysis with the unwinding of duplex DNA by translocating in the 3'-5' direction.</text>
        <dbReference type="EC" id="5.6.2.4"/>
    </reaction>
</comment>
<comment type="catalytic activity">
    <reaction evidence="2">
        <text>ATP + H2O = ADP + phosphate + H(+)</text>
        <dbReference type="Rhea" id="RHEA:13065"/>
        <dbReference type="ChEBI" id="CHEBI:15377"/>
        <dbReference type="ChEBI" id="CHEBI:15378"/>
        <dbReference type="ChEBI" id="CHEBI:30616"/>
        <dbReference type="ChEBI" id="CHEBI:43474"/>
        <dbReference type="ChEBI" id="CHEBI:456216"/>
        <dbReference type="EC" id="5.6.2.4"/>
    </reaction>
</comment>
<comment type="activity regulation">
    <text evidence="2">Phosphorylation on Ser-751 by CK2 controls the 5'-excision activity of ERCC1-XPF endonuclease; phosphorylated protein inhibits the excision activity and thus NER. ATPase activity is stimulated by TFIIH subunit p52 (GTF2H4). DNA translocase activity by this subunit in TFIIH is stimulated by XPA, ERCC5/XPG and XFP plus ERCC1.</text>
</comment>
<comment type="subunit">
    <text evidence="2">Component of the 7-subunit TFIIH core complex composed of XPB/ERCC3, XPD/ERCC2, GTF2H1, GTF2H2, GTF2H3, GTF2H4 and GTF2H5, which is active in NER. The core complex associates with the 3-subunit CDK-activating kinase (CAK) module composed of CCNH/cyclin H, CDK7 and MNAT1 to form the 10-subunit holoenzyme (holo-TFIIH) active in transcription. Interacts with PUF60. Interacts with ATF7IP. Interacts with KAT2A; leading to KAT2A recruitment to promoters and acetylation of histones. Part of TBP-based Pol II pre-initiation complex (PIC), in which Pol II core assembles with general transcription factors and other specific initiation factors including GTF2E1, GTF2E2, GTF2F1, GTF2F2, TCEA1, ERCC2, ERCC3, GTF2H2, GTF2H3, GTF2H4, GTF2H5, GTF2A1, GTF2A2, GTF2B and TBP; this large multi-subunit PIC complex mediates DNA unwinding and targets Pol II core to the transcription start site where the first phosphodiester bond forms.</text>
</comment>
<comment type="subcellular location">
    <subcellularLocation>
        <location evidence="1">Nucleus</location>
    </subcellularLocation>
</comment>
<comment type="PTM">
    <text evidence="2">Phosphorylation on Ser-751 by CK2 controls the 5'-excision activity of ERCC1-XPF endonuclease; phosphorylated protein inhibits the excision activity and thus NER. Dephosphorylation reactivates the 5'-excision step. Phosphorylation has no effect on transcription or the 3'-5' helicase activity.</text>
</comment>
<comment type="similarity">
    <text evidence="7">Belongs to the helicase family. RAD25/XPB subfamily.</text>
</comment>
<accession>Q60HG1</accession>
<name>ERCC3_MACFA</name>
<feature type="chain" id="PRO_0000101988" description="General transcription and DNA repair factor IIH helicase/translocase subunit XPB">
    <location>
        <begin position="1"/>
        <end position="782"/>
    </location>
</feature>
<feature type="domain" description="Helicase ATP-binding" evidence="4">
    <location>
        <begin position="327"/>
        <end position="488"/>
    </location>
</feature>
<feature type="domain" description="Helicase C-terminal" evidence="5">
    <location>
        <begin position="542"/>
        <end position="702"/>
    </location>
</feature>
<feature type="region of interest" description="Disordered" evidence="6">
    <location>
        <begin position="1"/>
        <end position="51"/>
    </location>
</feature>
<feature type="region of interest" description="Disordered" evidence="6">
    <location>
        <begin position="220"/>
        <end position="240"/>
    </location>
</feature>
<feature type="short sequence motif" description="Nuclear localization signal" evidence="3">
    <location>
        <begin position="6"/>
        <end position="18"/>
    </location>
</feature>
<feature type="short sequence motif" description="DEVH box">
    <location>
        <begin position="441"/>
        <end position="444"/>
    </location>
</feature>
<feature type="compositionally biased region" description="Basic and acidic residues" evidence="6">
    <location>
        <begin position="1"/>
        <end position="11"/>
    </location>
</feature>
<feature type="compositionally biased region" description="Acidic residues" evidence="6">
    <location>
        <begin position="21"/>
        <end position="30"/>
    </location>
</feature>
<feature type="binding site" evidence="4">
    <location>
        <begin position="340"/>
        <end position="347"/>
    </location>
    <ligand>
        <name>ATP</name>
        <dbReference type="ChEBI" id="CHEBI:30616"/>
    </ligand>
</feature>
<feature type="modified residue" description="Phosphoserine" evidence="2">
    <location>
        <position position="686"/>
    </location>
</feature>
<feature type="modified residue" description="Phosphoserine; by CK2" evidence="2">
    <location>
        <position position="751"/>
    </location>
</feature>
<sequence>MGKRDRADRDKKKSRKRHYEDEEDDEEDAPGNDPQEAVPSAAGKQVDESGTKVDEYGAKDYRLQMPLKDDHTSRPLWVAPDGHIFLEAFSPVYKYAQDFLVAIAEPVCRPTHVHEYKLTAYSLYAAVSVGLQTSDITEYLRKLSKTGVPDGIMQFIKLCTVSYGKVKLVLKHNRYFVESSHPDVIQHLLQDPVIRECRLRNSEGEATELITETFTSKSAISKTAEGSGGPSTSRVTDPQGKSDIPMDLFDFYEQMDKDEEEEEETQTVSFEVKQEMIEELQKRCIHLEYPLLAEYDFRNDSVNPDINIDLKPTAVLRPYQEKSLRKMFGNGRARSGVIVLPCGAGKSLVGVTAACTVRKRCLVLGNSAVSVEQWKAQFKMWSTIDDSQICRFTSDAKDKPIGCSVAISTYSMLGHTTKRSWEAERVMEWLKTQEWGLMILDEVHTIPAKMFRRVLTIVQAHCKLGLTATLVREDDKIVDLNFLIGPKLYEANWMELQNNGYIAKVQCAEVWCPMSPEFYREYVAIKTKKRILLYTMNPNKFRACQFLIKFHERRNDKIIVFADNVFALKEYAIRLNKPYIYGPTSQGERMQILQNFKHNPKINTIFISKVGDTSFDLPEANVLIQISSHGGSRRQEAQRLGRVLRAKKGMVAEEYNAFFYSLVSQDTQEMAYSTKRQRFLVDQGYSFKVITKLAGMEEEDLAFSTKEEQQQLLQKVLAATDLDAEEEVVAGEFGSRSSQASRRFGTMSSMSGADDTVYMEYHSSRSKAPSKHVHPLFKRFRK</sequence>
<evidence type="ECO:0000250" key="1"/>
<evidence type="ECO:0000250" key="2">
    <source>
        <dbReference type="UniProtKB" id="P19447"/>
    </source>
</evidence>
<evidence type="ECO:0000255" key="3"/>
<evidence type="ECO:0000255" key="4">
    <source>
        <dbReference type="PROSITE-ProRule" id="PRU00541"/>
    </source>
</evidence>
<evidence type="ECO:0000255" key="5">
    <source>
        <dbReference type="PROSITE-ProRule" id="PRU00542"/>
    </source>
</evidence>
<evidence type="ECO:0000256" key="6">
    <source>
        <dbReference type="SAM" id="MobiDB-lite"/>
    </source>
</evidence>
<evidence type="ECO:0000305" key="7"/>
<protein>
    <recommendedName>
        <fullName>General transcription and DNA repair factor IIH helicase/translocase subunit XPB</fullName>
        <shortName>TFIIH subunit XPB</shortName>
        <ecNumber evidence="7">5.6.2.4</ecNumber>
    </recommendedName>
    <alternativeName>
        <fullName evidence="7">DNA 3'-5' helicase/translocase XPB</fullName>
    </alternativeName>
    <alternativeName>
        <fullName>DNA excision repair protein ERCC-3</fullName>
    </alternativeName>
</protein>
<reference key="1">
    <citation type="submission" date="2003-10" db="EMBL/GenBank/DDBJ databases">
        <title>Isolation and characterization of cDNA for macaque neurological disease genes.</title>
        <authorList>
            <person name="Kusuda J."/>
            <person name="Osada N."/>
            <person name="Tanuma R."/>
            <person name="Hirata M."/>
            <person name="Sugano S."/>
            <person name="Hashimoto K."/>
        </authorList>
    </citation>
    <scope>NUCLEOTIDE SEQUENCE [LARGE SCALE MRNA]</scope>
    <source>
        <tissue>Parietal cortex</tissue>
    </source>
</reference>
<keyword id="KW-0067">ATP-binding</keyword>
<keyword id="KW-0227">DNA damage</keyword>
<keyword id="KW-0234">DNA repair</keyword>
<keyword id="KW-0238">DNA-binding</keyword>
<keyword id="KW-0347">Helicase</keyword>
<keyword id="KW-0378">Hydrolase</keyword>
<keyword id="KW-0413">Isomerase</keyword>
<keyword id="KW-0547">Nucleotide-binding</keyword>
<keyword id="KW-0539">Nucleus</keyword>
<keyword id="KW-0597">Phosphoprotein</keyword>
<keyword id="KW-1185">Reference proteome</keyword>
<keyword id="KW-0804">Transcription</keyword>
<keyword id="KW-0805">Transcription regulation</keyword>
<proteinExistence type="evidence at transcript level"/>
<gene>
    <name type="primary">ERCC3</name>
    <name type="ORF">QnpA-11695</name>
</gene>
<dbReference type="EC" id="5.6.2.4" evidence="7"/>
<dbReference type="EMBL" id="AB125166">
    <property type="protein sequence ID" value="BAD51954.1"/>
    <property type="molecule type" value="mRNA"/>
</dbReference>
<dbReference type="RefSeq" id="NP_001274561.1">
    <property type="nucleotide sequence ID" value="NM_001287632.1"/>
</dbReference>
<dbReference type="RefSeq" id="XP_045222825.1">
    <property type="nucleotide sequence ID" value="XM_045366890.2"/>
</dbReference>
<dbReference type="SMR" id="Q60HG1"/>
<dbReference type="STRING" id="9541.ENSMFAP00000033769"/>
<dbReference type="Ensembl" id="ENSMFAT00000008024.2">
    <property type="protein sequence ID" value="ENSMFAP00000033796.2"/>
    <property type="gene ID" value="ENSMFAG00000003370.2"/>
</dbReference>
<dbReference type="GeneID" id="102138496"/>
<dbReference type="VEuPathDB" id="HostDB:ENSMFAG00000003370"/>
<dbReference type="eggNOG" id="KOG1123">
    <property type="taxonomic scope" value="Eukaryota"/>
</dbReference>
<dbReference type="GeneTree" id="ENSGT00390000002204"/>
<dbReference type="OMA" id="RCQEIDY"/>
<dbReference type="Proteomes" id="UP000233100">
    <property type="component" value="Chromosome 12"/>
</dbReference>
<dbReference type="Bgee" id="ENSMFAG00000003370">
    <property type="expression patterns" value="Expressed in pituitary gland and 13 other cell types or tissues"/>
</dbReference>
<dbReference type="GO" id="GO:0000112">
    <property type="term" value="C:nucleotide-excision repair factor 3 complex"/>
    <property type="evidence" value="ECO:0007669"/>
    <property type="project" value="TreeGrafter"/>
</dbReference>
<dbReference type="GO" id="GO:0000439">
    <property type="term" value="C:transcription factor TFIIH core complex"/>
    <property type="evidence" value="ECO:0000250"/>
    <property type="project" value="UniProtKB"/>
</dbReference>
<dbReference type="GO" id="GO:0005675">
    <property type="term" value="C:transcription factor TFIIH holo complex"/>
    <property type="evidence" value="ECO:0007669"/>
    <property type="project" value="TreeGrafter"/>
</dbReference>
<dbReference type="GO" id="GO:0097550">
    <property type="term" value="C:transcription preinitiation complex"/>
    <property type="evidence" value="ECO:0007669"/>
    <property type="project" value="TreeGrafter"/>
</dbReference>
<dbReference type="GO" id="GO:0043138">
    <property type="term" value="F:3'-5' DNA helicase activity"/>
    <property type="evidence" value="ECO:0000250"/>
    <property type="project" value="UniProtKB"/>
</dbReference>
<dbReference type="GO" id="GO:0005524">
    <property type="term" value="F:ATP binding"/>
    <property type="evidence" value="ECO:0007669"/>
    <property type="project" value="UniProtKB-KW"/>
</dbReference>
<dbReference type="GO" id="GO:0016887">
    <property type="term" value="F:ATP hydrolysis activity"/>
    <property type="evidence" value="ECO:0000250"/>
    <property type="project" value="UniProtKB"/>
</dbReference>
<dbReference type="GO" id="GO:0003677">
    <property type="term" value="F:DNA binding"/>
    <property type="evidence" value="ECO:0007669"/>
    <property type="project" value="UniProtKB-KW"/>
</dbReference>
<dbReference type="GO" id="GO:0006915">
    <property type="term" value="P:apoptotic process"/>
    <property type="evidence" value="ECO:0000250"/>
    <property type="project" value="UniProtKB"/>
</dbReference>
<dbReference type="GO" id="GO:0006281">
    <property type="term" value="P:DNA repair"/>
    <property type="evidence" value="ECO:0000250"/>
    <property type="project" value="UniProtKB"/>
</dbReference>
<dbReference type="GO" id="GO:0006265">
    <property type="term" value="P:DNA topological change"/>
    <property type="evidence" value="ECO:0000250"/>
    <property type="project" value="UniProtKB"/>
</dbReference>
<dbReference type="GO" id="GO:0048568">
    <property type="term" value="P:embryonic organ development"/>
    <property type="evidence" value="ECO:0007669"/>
    <property type="project" value="TreeGrafter"/>
</dbReference>
<dbReference type="GO" id="GO:0035315">
    <property type="term" value="P:hair cell differentiation"/>
    <property type="evidence" value="ECO:0000250"/>
    <property type="project" value="UniProtKB"/>
</dbReference>
<dbReference type="GO" id="GO:0006289">
    <property type="term" value="P:nucleotide-excision repair"/>
    <property type="evidence" value="ECO:0000250"/>
    <property type="project" value="UniProtKB"/>
</dbReference>
<dbReference type="GO" id="GO:0008104">
    <property type="term" value="P:protein localization"/>
    <property type="evidence" value="ECO:0000250"/>
    <property type="project" value="UniProtKB"/>
</dbReference>
<dbReference type="GO" id="GO:1901990">
    <property type="term" value="P:regulation of mitotic cell cycle phase transition"/>
    <property type="evidence" value="ECO:0000250"/>
    <property type="project" value="UniProtKB"/>
</dbReference>
<dbReference type="GO" id="GO:0006979">
    <property type="term" value="P:response to oxidative stress"/>
    <property type="evidence" value="ECO:0000250"/>
    <property type="project" value="UniProtKB"/>
</dbReference>
<dbReference type="GO" id="GO:0009411">
    <property type="term" value="P:response to UV"/>
    <property type="evidence" value="ECO:0000250"/>
    <property type="project" value="UniProtKB"/>
</dbReference>
<dbReference type="GO" id="GO:0006366">
    <property type="term" value="P:transcription by RNA polymerase II"/>
    <property type="evidence" value="ECO:0000250"/>
    <property type="project" value="UniProtKB"/>
</dbReference>
<dbReference type="GO" id="GO:0006367">
    <property type="term" value="P:transcription initiation at RNA polymerase II promoter"/>
    <property type="evidence" value="ECO:0007669"/>
    <property type="project" value="InterPro"/>
</dbReference>
<dbReference type="GO" id="GO:0006283">
    <property type="term" value="P:transcription-coupled nucleotide-excision repair"/>
    <property type="evidence" value="ECO:0000250"/>
    <property type="project" value="UniProtKB"/>
</dbReference>
<dbReference type="CDD" id="cd18029">
    <property type="entry name" value="DEXHc_XPB"/>
    <property type="match status" value="1"/>
</dbReference>
<dbReference type="CDD" id="cd18789">
    <property type="entry name" value="SF2_C_XPB"/>
    <property type="match status" value="1"/>
</dbReference>
<dbReference type="FunFam" id="3.40.50.300:FF:000077">
    <property type="entry name" value="Probable DNA repair helicase RAD25"/>
    <property type="match status" value="1"/>
</dbReference>
<dbReference type="FunFam" id="3.40.50.300:FF:000117">
    <property type="entry name" value="Putative DNA repair helicase rad25"/>
    <property type="match status" value="1"/>
</dbReference>
<dbReference type="Gene3D" id="3.40.50.300">
    <property type="entry name" value="P-loop containing nucleotide triphosphate hydrolases"/>
    <property type="match status" value="2"/>
</dbReference>
<dbReference type="InterPro" id="IPR050615">
    <property type="entry name" value="ATP-dep_DNA_Helicase"/>
</dbReference>
<dbReference type="InterPro" id="IPR032438">
    <property type="entry name" value="ERCC3_RAD25_C"/>
</dbReference>
<dbReference type="InterPro" id="IPR006935">
    <property type="entry name" value="Helicase/UvrB_N"/>
</dbReference>
<dbReference type="InterPro" id="IPR014001">
    <property type="entry name" value="Helicase_ATP-bd"/>
</dbReference>
<dbReference type="InterPro" id="IPR001650">
    <property type="entry name" value="Helicase_C-like"/>
</dbReference>
<dbReference type="InterPro" id="IPR027417">
    <property type="entry name" value="P-loop_NTPase"/>
</dbReference>
<dbReference type="InterPro" id="IPR001161">
    <property type="entry name" value="XPB/Ssl2"/>
</dbReference>
<dbReference type="InterPro" id="IPR032830">
    <property type="entry name" value="XPB/Ssl2_N"/>
</dbReference>
<dbReference type="NCBIfam" id="TIGR00603">
    <property type="entry name" value="rad25"/>
    <property type="match status" value="1"/>
</dbReference>
<dbReference type="PANTHER" id="PTHR11274:SF0">
    <property type="entry name" value="GENERAL TRANSCRIPTION AND DNA REPAIR FACTOR IIH HELICASE SUBUNIT XPB"/>
    <property type="match status" value="1"/>
</dbReference>
<dbReference type="PANTHER" id="PTHR11274">
    <property type="entry name" value="RAD25/XP-B DNA REPAIR HELICASE"/>
    <property type="match status" value="1"/>
</dbReference>
<dbReference type="Pfam" id="PF16203">
    <property type="entry name" value="ERCC3_RAD25_C"/>
    <property type="match status" value="1"/>
</dbReference>
<dbReference type="Pfam" id="PF13625">
    <property type="entry name" value="Helicase_C_3"/>
    <property type="match status" value="1"/>
</dbReference>
<dbReference type="Pfam" id="PF04851">
    <property type="entry name" value="ResIII"/>
    <property type="match status" value="1"/>
</dbReference>
<dbReference type="PRINTS" id="PR00851">
    <property type="entry name" value="XRODRMPGMNTB"/>
</dbReference>
<dbReference type="SMART" id="SM00487">
    <property type="entry name" value="DEXDc"/>
    <property type="match status" value="1"/>
</dbReference>
<dbReference type="SMART" id="SM00490">
    <property type="entry name" value="HELICc"/>
    <property type="match status" value="1"/>
</dbReference>
<dbReference type="SUPFAM" id="SSF52540">
    <property type="entry name" value="P-loop containing nucleoside triphosphate hydrolases"/>
    <property type="match status" value="2"/>
</dbReference>
<dbReference type="PROSITE" id="PS51192">
    <property type="entry name" value="HELICASE_ATP_BIND_1"/>
    <property type="match status" value="1"/>
</dbReference>
<dbReference type="PROSITE" id="PS51194">
    <property type="entry name" value="HELICASE_CTER"/>
    <property type="match status" value="1"/>
</dbReference>
<organism>
    <name type="scientific">Macaca fascicularis</name>
    <name type="common">Crab-eating macaque</name>
    <name type="synonym">Cynomolgus monkey</name>
    <dbReference type="NCBI Taxonomy" id="9541"/>
    <lineage>
        <taxon>Eukaryota</taxon>
        <taxon>Metazoa</taxon>
        <taxon>Chordata</taxon>
        <taxon>Craniata</taxon>
        <taxon>Vertebrata</taxon>
        <taxon>Euteleostomi</taxon>
        <taxon>Mammalia</taxon>
        <taxon>Eutheria</taxon>
        <taxon>Euarchontoglires</taxon>
        <taxon>Primates</taxon>
        <taxon>Haplorrhini</taxon>
        <taxon>Catarrhini</taxon>
        <taxon>Cercopithecidae</taxon>
        <taxon>Cercopithecinae</taxon>
        <taxon>Macaca</taxon>
    </lineage>
</organism>